<keyword id="KW-0963">Cytoplasm</keyword>
<keyword id="KW-0396">Initiation factor</keyword>
<keyword id="KW-0648">Protein biosynthesis</keyword>
<keyword id="KW-1185">Reference proteome</keyword>
<keyword id="KW-0694">RNA-binding</keyword>
<keyword id="KW-0699">rRNA-binding</keyword>
<accession>P9WKK2</accession>
<accession>L0TCT8</accession>
<accession>P0A5H5</accession>
<accession>P45957</accession>
<sequence length="73" mass="8489">MAKKDGAIEVEGRVVEPLPNAMFRIELENGHKVLAHISGKMRQHYIRILPEDRVVVELSPYDLSRGRIVYRYK</sequence>
<evidence type="ECO:0000250" key="1"/>
<evidence type="ECO:0000255" key="2">
    <source>
        <dbReference type="HAMAP-Rule" id="MF_00075"/>
    </source>
</evidence>
<protein>
    <recommendedName>
        <fullName evidence="2">Translation initiation factor IF-1</fullName>
    </recommendedName>
</protein>
<organism>
    <name type="scientific">Mycobacterium tuberculosis (strain CDC 1551 / Oshkosh)</name>
    <dbReference type="NCBI Taxonomy" id="83331"/>
    <lineage>
        <taxon>Bacteria</taxon>
        <taxon>Bacillati</taxon>
        <taxon>Actinomycetota</taxon>
        <taxon>Actinomycetes</taxon>
        <taxon>Mycobacteriales</taxon>
        <taxon>Mycobacteriaceae</taxon>
        <taxon>Mycobacterium</taxon>
        <taxon>Mycobacterium tuberculosis complex</taxon>
    </lineage>
</organism>
<gene>
    <name evidence="2" type="primary">infA</name>
    <name type="ordered locus">MT3568</name>
</gene>
<reference key="1">
    <citation type="journal article" date="2002" name="J. Bacteriol.">
        <title>Whole-genome comparison of Mycobacterium tuberculosis clinical and laboratory strains.</title>
        <authorList>
            <person name="Fleischmann R.D."/>
            <person name="Alland D."/>
            <person name="Eisen J.A."/>
            <person name="Carpenter L."/>
            <person name="White O."/>
            <person name="Peterson J.D."/>
            <person name="DeBoy R.T."/>
            <person name="Dodson R.J."/>
            <person name="Gwinn M.L."/>
            <person name="Haft D.H."/>
            <person name="Hickey E.K."/>
            <person name="Kolonay J.F."/>
            <person name="Nelson W.C."/>
            <person name="Umayam L.A."/>
            <person name="Ermolaeva M.D."/>
            <person name="Salzberg S.L."/>
            <person name="Delcher A."/>
            <person name="Utterback T.R."/>
            <person name="Weidman J.F."/>
            <person name="Khouri H.M."/>
            <person name="Gill J."/>
            <person name="Mikula A."/>
            <person name="Bishai W."/>
            <person name="Jacobs W.R. Jr."/>
            <person name="Venter J.C."/>
            <person name="Fraser C.M."/>
        </authorList>
    </citation>
    <scope>NUCLEOTIDE SEQUENCE [LARGE SCALE GENOMIC DNA]</scope>
    <source>
        <strain>CDC 1551 / Oshkosh</strain>
    </source>
</reference>
<feature type="initiator methionine" description="Removed" evidence="1">
    <location>
        <position position="1"/>
    </location>
</feature>
<feature type="chain" id="PRO_0000427639" description="Translation initiation factor IF-1">
    <location>
        <begin position="2"/>
        <end position="73"/>
    </location>
</feature>
<feature type="domain" description="S1-like" evidence="2">
    <location>
        <begin position="2"/>
        <end position="73"/>
    </location>
</feature>
<proteinExistence type="inferred from homology"/>
<comment type="function">
    <text evidence="2">One of the essential components for the initiation of protein synthesis. Stabilizes the binding of IF-2 and IF-3 on the 30S subunit to which N-formylmethionyl-tRNA(fMet) subsequently binds. Helps modulate mRNA selection, yielding the 30S pre-initiation complex (PIC). Upon addition of the 50S ribosomal subunit IF-1, IF-2 and IF-3 are released leaving the mature 70S translation initiation complex.</text>
</comment>
<comment type="subunit">
    <text evidence="2">Component of the 30S ribosomal translation pre-initiation complex which assembles on the 30S ribosome in the order IF-2 and IF-3, IF-1 and N-formylmethionyl-tRNA(fMet); mRNA recruitment can occur at any time during PIC assembly.</text>
</comment>
<comment type="subcellular location">
    <subcellularLocation>
        <location evidence="2">Cytoplasm</location>
    </subcellularLocation>
</comment>
<comment type="similarity">
    <text evidence="2">Belongs to the IF-1 family.</text>
</comment>
<dbReference type="EMBL" id="AE000516">
    <property type="protein sequence ID" value="AAK47908.1"/>
    <property type="molecule type" value="Genomic_DNA"/>
</dbReference>
<dbReference type="PIR" id="C70566">
    <property type="entry name" value="C70566"/>
</dbReference>
<dbReference type="RefSeq" id="WP_003418601.1">
    <property type="nucleotide sequence ID" value="NZ_KK341227.1"/>
</dbReference>
<dbReference type="SMR" id="P9WKK2"/>
<dbReference type="GeneID" id="98799387"/>
<dbReference type="KEGG" id="mtc:MT3568"/>
<dbReference type="PATRIC" id="fig|83331.31.peg.3825"/>
<dbReference type="HOGENOM" id="CLU_151267_1_0_11"/>
<dbReference type="Proteomes" id="UP000001020">
    <property type="component" value="Chromosome"/>
</dbReference>
<dbReference type="GO" id="GO:0005829">
    <property type="term" value="C:cytosol"/>
    <property type="evidence" value="ECO:0007669"/>
    <property type="project" value="TreeGrafter"/>
</dbReference>
<dbReference type="GO" id="GO:0043022">
    <property type="term" value="F:ribosome binding"/>
    <property type="evidence" value="ECO:0007669"/>
    <property type="project" value="UniProtKB-UniRule"/>
</dbReference>
<dbReference type="GO" id="GO:0019843">
    <property type="term" value="F:rRNA binding"/>
    <property type="evidence" value="ECO:0007669"/>
    <property type="project" value="UniProtKB-UniRule"/>
</dbReference>
<dbReference type="GO" id="GO:0003743">
    <property type="term" value="F:translation initiation factor activity"/>
    <property type="evidence" value="ECO:0007669"/>
    <property type="project" value="UniProtKB-UniRule"/>
</dbReference>
<dbReference type="CDD" id="cd04451">
    <property type="entry name" value="S1_IF1"/>
    <property type="match status" value="1"/>
</dbReference>
<dbReference type="FunFam" id="2.40.50.140:FF:000002">
    <property type="entry name" value="Translation initiation factor IF-1"/>
    <property type="match status" value="1"/>
</dbReference>
<dbReference type="Gene3D" id="2.40.50.140">
    <property type="entry name" value="Nucleic acid-binding proteins"/>
    <property type="match status" value="1"/>
</dbReference>
<dbReference type="HAMAP" id="MF_00075">
    <property type="entry name" value="IF_1"/>
    <property type="match status" value="1"/>
</dbReference>
<dbReference type="InterPro" id="IPR012340">
    <property type="entry name" value="NA-bd_OB-fold"/>
</dbReference>
<dbReference type="InterPro" id="IPR006196">
    <property type="entry name" value="RNA-binding_domain_S1_IF1"/>
</dbReference>
<dbReference type="InterPro" id="IPR004368">
    <property type="entry name" value="TIF_IF1"/>
</dbReference>
<dbReference type="NCBIfam" id="TIGR00008">
    <property type="entry name" value="infA"/>
    <property type="match status" value="1"/>
</dbReference>
<dbReference type="PANTHER" id="PTHR33370">
    <property type="entry name" value="TRANSLATION INITIATION FACTOR IF-1, CHLOROPLASTIC"/>
    <property type="match status" value="1"/>
</dbReference>
<dbReference type="PANTHER" id="PTHR33370:SF1">
    <property type="entry name" value="TRANSLATION INITIATION FACTOR IF-1, CHLOROPLASTIC"/>
    <property type="match status" value="1"/>
</dbReference>
<dbReference type="Pfam" id="PF01176">
    <property type="entry name" value="eIF-1a"/>
    <property type="match status" value="1"/>
</dbReference>
<dbReference type="SUPFAM" id="SSF50249">
    <property type="entry name" value="Nucleic acid-binding proteins"/>
    <property type="match status" value="1"/>
</dbReference>
<dbReference type="PROSITE" id="PS50832">
    <property type="entry name" value="S1_IF1_TYPE"/>
    <property type="match status" value="1"/>
</dbReference>
<name>IF1_MYCTO</name>